<organism>
    <name type="scientific">Yersinia pseudotuberculosis serotype O:1b (strain IP 31758)</name>
    <dbReference type="NCBI Taxonomy" id="349747"/>
    <lineage>
        <taxon>Bacteria</taxon>
        <taxon>Pseudomonadati</taxon>
        <taxon>Pseudomonadota</taxon>
        <taxon>Gammaproteobacteria</taxon>
        <taxon>Enterobacterales</taxon>
        <taxon>Yersiniaceae</taxon>
        <taxon>Yersinia</taxon>
    </lineage>
</organism>
<reference key="1">
    <citation type="journal article" date="2007" name="PLoS Genet.">
        <title>The complete genome sequence of Yersinia pseudotuberculosis IP31758, the causative agent of Far East scarlet-like fever.</title>
        <authorList>
            <person name="Eppinger M."/>
            <person name="Rosovitz M.J."/>
            <person name="Fricke W.F."/>
            <person name="Rasko D.A."/>
            <person name="Kokorina G."/>
            <person name="Fayolle C."/>
            <person name="Lindler L.E."/>
            <person name="Carniel E."/>
            <person name="Ravel J."/>
        </authorList>
    </citation>
    <scope>NUCLEOTIDE SEQUENCE [LARGE SCALE GENOMIC DNA]</scope>
    <source>
        <strain>IP 31758</strain>
    </source>
</reference>
<evidence type="ECO:0000255" key="1">
    <source>
        <dbReference type="HAMAP-Rule" id="MF_00095"/>
    </source>
</evidence>
<dbReference type="EMBL" id="CP000720">
    <property type="protein sequence ID" value="ABS48864.1"/>
    <property type="molecule type" value="Genomic_DNA"/>
</dbReference>
<dbReference type="RefSeq" id="WP_012105656.1">
    <property type="nucleotide sequence ID" value="NC_009708.1"/>
</dbReference>
<dbReference type="SMR" id="A7FM16"/>
<dbReference type="KEGG" id="ypi:YpsIP31758_3337"/>
<dbReference type="HOGENOM" id="CLU_052299_2_0_6"/>
<dbReference type="Proteomes" id="UP000002412">
    <property type="component" value="Chromosome"/>
</dbReference>
<dbReference type="GO" id="GO:0003677">
    <property type="term" value="F:DNA binding"/>
    <property type="evidence" value="ECO:0007669"/>
    <property type="project" value="InterPro"/>
</dbReference>
<dbReference type="CDD" id="cd22359">
    <property type="entry name" value="SfsA-like_bacterial"/>
    <property type="match status" value="1"/>
</dbReference>
<dbReference type="FunFam" id="2.40.50.580:FF:000001">
    <property type="entry name" value="Sugar fermentation stimulation protein A"/>
    <property type="match status" value="1"/>
</dbReference>
<dbReference type="FunFam" id="3.40.1350.60:FF:000001">
    <property type="entry name" value="Sugar fermentation stimulation protein A"/>
    <property type="match status" value="1"/>
</dbReference>
<dbReference type="Gene3D" id="2.40.50.580">
    <property type="match status" value="1"/>
</dbReference>
<dbReference type="Gene3D" id="3.40.1350.60">
    <property type="match status" value="1"/>
</dbReference>
<dbReference type="HAMAP" id="MF_00095">
    <property type="entry name" value="SfsA"/>
    <property type="match status" value="1"/>
</dbReference>
<dbReference type="InterPro" id="IPR005224">
    <property type="entry name" value="SfsA"/>
</dbReference>
<dbReference type="InterPro" id="IPR040452">
    <property type="entry name" value="SfsA_C"/>
</dbReference>
<dbReference type="InterPro" id="IPR041465">
    <property type="entry name" value="SfsA_N"/>
</dbReference>
<dbReference type="NCBIfam" id="TIGR00230">
    <property type="entry name" value="sfsA"/>
    <property type="match status" value="1"/>
</dbReference>
<dbReference type="PANTHER" id="PTHR30545">
    <property type="entry name" value="SUGAR FERMENTATION STIMULATION PROTEIN A"/>
    <property type="match status" value="1"/>
</dbReference>
<dbReference type="PANTHER" id="PTHR30545:SF2">
    <property type="entry name" value="SUGAR FERMENTATION STIMULATION PROTEIN A"/>
    <property type="match status" value="1"/>
</dbReference>
<dbReference type="Pfam" id="PF03749">
    <property type="entry name" value="SfsA"/>
    <property type="match status" value="1"/>
</dbReference>
<dbReference type="Pfam" id="PF17746">
    <property type="entry name" value="SfsA_N"/>
    <property type="match status" value="1"/>
</dbReference>
<comment type="similarity">
    <text evidence="1">Belongs to the SfsA family.</text>
</comment>
<gene>
    <name evidence="1" type="primary">sfsA</name>
    <name type="ordered locus">YpsIP31758_3337</name>
</gene>
<name>SFSA_YERP3</name>
<sequence length="251" mass="28201">MPANAPLLQFTPPLQPATLILRYKRFLADIVTPAGEALTIHCANTGAMTGCATPGDTIWYSTSDNPKRKYPQSWELTQTQTGDWICVNTMRANELVNLAIEKNQIAELSGYNFVRKEVKYGEENSRIDLLLQAEDRRDCYIEVKSVTLLQQQCGYFPDAVTLRGQKHLRELQNRVVNGHRAVLFFAVLHTGIKQVAPARHIDRRYAELLVQAQQAGVEVICYGFQLSPDGIALNTRLPLLLDEMLSSENAE</sequence>
<feature type="chain" id="PRO_0000340166" description="Sugar fermentation stimulation protein homolog">
    <location>
        <begin position="1"/>
        <end position="251"/>
    </location>
</feature>
<protein>
    <recommendedName>
        <fullName evidence="1">Sugar fermentation stimulation protein homolog</fullName>
    </recommendedName>
</protein>
<proteinExistence type="inferred from homology"/>
<accession>A7FM16</accession>